<sequence>MGLFDKLAGWLGLKKKEVNVLCLGLDNSGKTTIINQLKPSNAQAQDIVPTIGFSIEKFKTSSLSFTVFDMSGQGRYRNLWEHYYKEGQAIIFVIDSGDKLRMVVAKEELDTLLNHPDIKHRRIPLLFFANKMDLRDALSAVKVSQLLCLENIKDKPWHICASDAVKGEGLLEGVDWLQDQIRAMKT</sequence>
<protein>
    <recommendedName>
        <fullName>ADP-ribosylation factor-like protein 6</fullName>
    </recommendedName>
</protein>
<reference key="1">
    <citation type="journal article" date="2013" name="Nature">
        <title>The zebrafish reference genome sequence and its relationship to the human genome.</title>
        <authorList>
            <person name="Howe K."/>
            <person name="Clark M.D."/>
            <person name="Torroja C.F."/>
            <person name="Torrance J."/>
            <person name="Berthelot C."/>
            <person name="Muffato M."/>
            <person name="Collins J.E."/>
            <person name="Humphray S."/>
            <person name="McLaren K."/>
            <person name="Matthews L."/>
            <person name="McLaren S."/>
            <person name="Sealy I."/>
            <person name="Caccamo M."/>
            <person name="Churcher C."/>
            <person name="Scott C."/>
            <person name="Barrett J.C."/>
            <person name="Koch R."/>
            <person name="Rauch G.J."/>
            <person name="White S."/>
            <person name="Chow W."/>
            <person name="Kilian B."/>
            <person name="Quintais L.T."/>
            <person name="Guerra-Assuncao J.A."/>
            <person name="Zhou Y."/>
            <person name="Gu Y."/>
            <person name="Yen J."/>
            <person name="Vogel J.H."/>
            <person name="Eyre T."/>
            <person name="Redmond S."/>
            <person name="Banerjee R."/>
            <person name="Chi J."/>
            <person name="Fu B."/>
            <person name="Langley E."/>
            <person name="Maguire S.F."/>
            <person name="Laird G.K."/>
            <person name="Lloyd D."/>
            <person name="Kenyon E."/>
            <person name="Donaldson S."/>
            <person name="Sehra H."/>
            <person name="Almeida-King J."/>
            <person name="Loveland J."/>
            <person name="Trevanion S."/>
            <person name="Jones M."/>
            <person name="Quail M."/>
            <person name="Willey D."/>
            <person name="Hunt A."/>
            <person name="Burton J."/>
            <person name="Sims S."/>
            <person name="McLay K."/>
            <person name="Plumb B."/>
            <person name="Davis J."/>
            <person name="Clee C."/>
            <person name="Oliver K."/>
            <person name="Clark R."/>
            <person name="Riddle C."/>
            <person name="Elliot D."/>
            <person name="Threadgold G."/>
            <person name="Harden G."/>
            <person name="Ware D."/>
            <person name="Begum S."/>
            <person name="Mortimore B."/>
            <person name="Kerry G."/>
            <person name="Heath P."/>
            <person name="Phillimore B."/>
            <person name="Tracey A."/>
            <person name="Corby N."/>
            <person name="Dunn M."/>
            <person name="Johnson C."/>
            <person name="Wood J."/>
            <person name="Clark S."/>
            <person name="Pelan S."/>
            <person name="Griffiths G."/>
            <person name="Smith M."/>
            <person name="Glithero R."/>
            <person name="Howden P."/>
            <person name="Barker N."/>
            <person name="Lloyd C."/>
            <person name="Stevens C."/>
            <person name="Harley J."/>
            <person name="Holt K."/>
            <person name="Panagiotidis G."/>
            <person name="Lovell J."/>
            <person name="Beasley H."/>
            <person name="Henderson C."/>
            <person name="Gordon D."/>
            <person name="Auger K."/>
            <person name="Wright D."/>
            <person name="Collins J."/>
            <person name="Raisen C."/>
            <person name="Dyer L."/>
            <person name="Leung K."/>
            <person name="Robertson L."/>
            <person name="Ambridge K."/>
            <person name="Leongamornlert D."/>
            <person name="McGuire S."/>
            <person name="Gilderthorp R."/>
            <person name="Griffiths C."/>
            <person name="Manthravadi D."/>
            <person name="Nichol S."/>
            <person name="Barker G."/>
            <person name="Whitehead S."/>
            <person name="Kay M."/>
            <person name="Brown J."/>
            <person name="Murnane C."/>
            <person name="Gray E."/>
            <person name="Humphries M."/>
            <person name="Sycamore N."/>
            <person name="Barker D."/>
            <person name="Saunders D."/>
            <person name="Wallis J."/>
            <person name="Babbage A."/>
            <person name="Hammond S."/>
            <person name="Mashreghi-Mohammadi M."/>
            <person name="Barr L."/>
            <person name="Martin S."/>
            <person name="Wray P."/>
            <person name="Ellington A."/>
            <person name="Matthews N."/>
            <person name="Ellwood M."/>
            <person name="Woodmansey R."/>
            <person name="Clark G."/>
            <person name="Cooper J."/>
            <person name="Tromans A."/>
            <person name="Grafham D."/>
            <person name="Skuce C."/>
            <person name="Pandian R."/>
            <person name="Andrews R."/>
            <person name="Harrison E."/>
            <person name="Kimberley A."/>
            <person name="Garnett J."/>
            <person name="Fosker N."/>
            <person name="Hall R."/>
            <person name="Garner P."/>
            <person name="Kelly D."/>
            <person name="Bird C."/>
            <person name="Palmer S."/>
            <person name="Gehring I."/>
            <person name="Berger A."/>
            <person name="Dooley C.M."/>
            <person name="Ersan-Urun Z."/>
            <person name="Eser C."/>
            <person name="Geiger H."/>
            <person name="Geisler M."/>
            <person name="Karotki L."/>
            <person name="Kirn A."/>
            <person name="Konantz J."/>
            <person name="Konantz M."/>
            <person name="Oberlander M."/>
            <person name="Rudolph-Geiger S."/>
            <person name="Teucke M."/>
            <person name="Lanz C."/>
            <person name="Raddatz G."/>
            <person name="Osoegawa K."/>
            <person name="Zhu B."/>
            <person name="Rapp A."/>
            <person name="Widaa S."/>
            <person name="Langford C."/>
            <person name="Yang F."/>
            <person name="Schuster S.C."/>
            <person name="Carter N.P."/>
            <person name="Harrow J."/>
            <person name="Ning Z."/>
            <person name="Herrero J."/>
            <person name="Searle S.M."/>
            <person name="Enright A."/>
            <person name="Geisler R."/>
            <person name="Plasterk R.H."/>
            <person name="Lee C."/>
            <person name="Westerfield M."/>
            <person name="de Jong P.J."/>
            <person name="Zon L.I."/>
            <person name="Postlethwait J.H."/>
            <person name="Nusslein-Volhard C."/>
            <person name="Hubbard T.J."/>
            <person name="Roest Crollius H."/>
            <person name="Rogers J."/>
            <person name="Stemple D.L."/>
        </authorList>
    </citation>
    <scope>NUCLEOTIDE SEQUENCE [LARGE SCALE GENOMIC DNA] (ISOFORM 1)</scope>
    <source>
        <strain>Tuebingen</strain>
    </source>
</reference>
<reference key="2">
    <citation type="submission" date="2004-12" db="EMBL/GenBank/DDBJ databases">
        <authorList>
            <consortium name="NIH - Zebrafish Gene Collection (ZGC) project"/>
        </authorList>
    </citation>
    <scope>NUCLEOTIDE SEQUENCE [LARGE SCALE MRNA] (ISOFORM 1)</scope>
    <source>
        <tissue>Olfactory epithelium</tissue>
    </source>
</reference>
<reference key="3">
    <citation type="journal article" date="2010" name="PLoS Genet.">
        <title>Identification and functional analysis of the vision-specific BBS3 (ARL6) long isoform.</title>
        <authorList>
            <person name="Pretorius P.R."/>
            <person name="Baye L.M."/>
            <person name="Nishimura D.Y."/>
            <person name="Searby C.C."/>
            <person name="Bugge K."/>
            <person name="Yang B."/>
            <person name="Mullins R.F."/>
            <person name="Stone E.M."/>
            <person name="Sheffield V.C."/>
            <person name="Slusarski D.C."/>
        </authorList>
    </citation>
    <scope>ALTERNATIVE SPLICING (ISOFORM 2)</scope>
    <scope>FUNCTION</scope>
    <scope>TISSUE SPECIFICITY</scope>
    <scope>DEVELOPMENTAL STAGE</scope>
    <scope>DISRUPTION PHENOTYPE</scope>
</reference>
<name>ARL6_DANRE</name>
<keyword id="KW-0025">Alternative splicing</keyword>
<keyword id="KW-1003">Cell membrane</keyword>
<keyword id="KW-0966">Cell projection</keyword>
<keyword id="KW-0969">Cilium</keyword>
<keyword id="KW-0970">Cilium biogenesis/degradation</keyword>
<keyword id="KW-0963">Cytoplasm</keyword>
<keyword id="KW-0206">Cytoskeleton</keyword>
<keyword id="KW-0342">GTP-binding</keyword>
<keyword id="KW-0449">Lipoprotein</keyword>
<keyword id="KW-0460">Magnesium</keyword>
<keyword id="KW-0472">Membrane</keyword>
<keyword id="KW-0479">Metal-binding</keyword>
<keyword id="KW-0519">Myristate</keyword>
<keyword id="KW-0547">Nucleotide-binding</keyword>
<keyword id="KW-1185">Reference proteome</keyword>
<keyword id="KW-0716">Sensory transduction</keyword>
<keyword id="KW-0844">Vision</keyword>
<accession>Q5M9P8</accession>
<organism>
    <name type="scientific">Danio rerio</name>
    <name type="common">Zebrafish</name>
    <name type="synonym">Brachydanio rerio</name>
    <dbReference type="NCBI Taxonomy" id="7955"/>
    <lineage>
        <taxon>Eukaryota</taxon>
        <taxon>Metazoa</taxon>
        <taxon>Chordata</taxon>
        <taxon>Craniata</taxon>
        <taxon>Vertebrata</taxon>
        <taxon>Euteleostomi</taxon>
        <taxon>Actinopterygii</taxon>
        <taxon>Neopterygii</taxon>
        <taxon>Teleostei</taxon>
        <taxon>Ostariophysi</taxon>
        <taxon>Cypriniformes</taxon>
        <taxon>Danionidae</taxon>
        <taxon>Danioninae</taxon>
        <taxon>Danio</taxon>
    </lineage>
</organism>
<proteinExistence type="evidence at transcript level"/>
<gene>
    <name type="primary">arl6</name>
    <name type="ORF">si:dkey-24h22.2</name>
    <name type="ORF">zgc:101762</name>
</gene>
<feature type="initiator methionine" description="Removed" evidence="2">
    <location>
        <position position="1"/>
    </location>
</feature>
<feature type="chain" id="PRO_0000404211" description="ADP-ribosylation factor-like protein 6">
    <location>
        <begin position="2"/>
        <end position="186"/>
    </location>
</feature>
<feature type="binding site" evidence="1">
    <location>
        <begin position="24"/>
        <end position="31"/>
    </location>
    <ligand>
        <name>GTP</name>
        <dbReference type="ChEBI" id="CHEBI:37565"/>
    </ligand>
</feature>
<feature type="binding site" evidence="1">
    <location>
        <position position="50"/>
    </location>
    <ligand>
        <name>GTP</name>
        <dbReference type="ChEBI" id="CHEBI:37565"/>
    </ligand>
</feature>
<feature type="binding site" evidence="1">
    <location>
        <position position="50"/>
    </location>
    <ligand>
        <name>Mg(2+)</name>
        <dbReference type="ChEBI" id="CHEBI:18420"/>
    </ligand>
</feature>
<feature type="binding site" evidence="1">
    <location>
        <begin position="69"/>
        <end position="73"/>
    </location>
    <ligand>
        <name>GTP</name>
        <dbReference type="ChEBI" id="CHEBI:37565"/>
    </ligand>
</feature>
<feature type="binding site" evidence="1">
    <location>
        <position position="72"/>
    </location>
    <ligand>
        <name>GTP</name>
        <dbReference type="ChEBI" id="CHEBI:37565"/>
    </ligand>
</feature>
<feature type="binding site" evidence="1">
    <location>
        <begin position="130"/>
        <end position="133"/>
    </location>
    <ligand>
        <name>GTP</name>
        <dbReference type="ChEBI" id="CHEBI:37565"/>
    </ligand>
</feature>
<feature type="binding site" evidence="1">
    <location>
        <position position="164"/>
    </location>
    <ligand>
        <name>GTP</name>
        <dbReference type="ChEBI" id="CHEBI:37565"/>
    </ligand>
</feature>
<feature type="lipid moiety-binding region" description="N-myristoyl glycine" evidence="2">
    <location>
        <position position="2"/>
    </location>
</feature>
<feature type="splice variant" id="VSP_040513" description="In isoform 2." evidence="4">
    <original>DQIRAMKT</original>
    <variation>EQIALSNQSDENVKPS</variation>
    <location>
        <begin position="179"/>
        <end position="186"/>
    </location>
</feature>
<dbReference type="EMBL" id="BX901972">
    <property type="protein sequence ID" value="CAX13374.1"/>
    <property type="molecule type" value="Genomic_DNA"/>
</dbReference>
<dbReference type="EMBL" id="BC086734">
    <property type="protein sequence ID" value="AAH86734.1"/>
    <property type="molecule type" value="mRNA"/>
</dbReference>
<dbReference type="RefSeq" id="NP_001008733.1">
    <molecule id="Q5M9P8-1"/>
    <property type="nucleotide sequence ID" value="NM_001008733.1"/>
</dbReference>
<dbReference type="SMR" id="Q5M9P8"/>
<dbReference type="FunCoup" id="Q5M9P8">
    <property type="interactions" value="169"/>
</dbReference>
<dbReference type="STRING" id="7955.ENSDARP00000046093"/>
<dbReference type="PaxDb" id="7955-ENSDARP00000046093"/>
<dbReference type="Ensembl" id="ENSDART00000046094">
    <molecule id="Q5M9P8-1"/>
    <property type="protein sequence ID" value="ENSDARP00000046093"/>
    <property type="gene ID" value="ENSDARG00000032056"/>
</dbReference>
<dbReference type="Ensembl" id="ENSDART00000180898">
    <molecule id="Q5M9P8-1"/>
    <property type="protein sequence ID" value="ENSDARP00000152357"/>
    <property type="gene ID" value="ENSDARG00000113281"/>
</dbReference>
<dbReference type="Ensembl" id="ENSDART00000192938">
    <molecule id="Q5M9P8-1"/>
    <property type="protein sequence ID" value="ENSDARP00000155069"/>
    <property type="gene ID" value="ENSDARG00000032056"/>
</dbReference>
<dbReference type="GeneID" id="494134"/>
<dbReference type="KEGG" id="dre:494134"/>
<dbReference type="AGR" id="ZFIN:ZDB-GENE-041219-2"/>
<dbReference type="CTD" id="84100"/>
<dbReference type="ZFIN" id="ZDB-GENE-041219-2">
    <property type="gene designation" value="arl6"/>
</dbReference>
<dbReference type="eggNOG" id="KOG0070">
    <property type="taxonomic scope" value="Eukaryota"/>
</dbReference>
<dbReference type="HOGENOM" id="CLU_040729_9_1_1"/>
<dbReference type="InParanoid" id="Q5M9P8"/>
<dbReference type="OMA" id="NKPWHIC"/>
<dbReference type="OrthoDB" id="442317at2759"/>
<dbReference type="PhylomeDB" id="Q5M9P8"/>
<dbReference type="TreeFam" id="TF105466"/>
<dbReference type="PRO" id="PR:Q5M9P8"/>
<dbReference type="Proteomes" id="UP000000437">
    <property type="component" value="Alternate scaffold 1"/>
</dbReference>
<dbReference type="Proteomes" id="UP000000437">
    <property type="component" value="Chromosome 1"/>
</dbReference>
<dbReference type="Bgee" id="ENSDARG00000032056">
    <property type="expression patterns" value="Expressed in testis and 19 other cell types or tissues"/>
</dbReference>
<dbReference type="ExpressionAtlas" id="Q5M9P8">
    <property type="expression patterns" value="baseline and differential"/>
</dbReference>
<dbReference type="GO" id="GO:0005930">
    <property type="term" value="C:axoneme"/>
    <property type="evidence" value="ECO:0000318"/>
    <property type="project" value="GO_Central"/>
</dbReference>
<dbReference type="GO" id="GO:0060170">
    <property type="term" value="C:ciliary membrane"/>
    <property type="evidence" value="ECO:0007669"/>
    <property type="project" value="UniProtKB-SubCell"/>
</dbReference>
<dbReference type="GO" id="GO:0005737">
    <property type="term" value="C:cytoplasm"/>
    <property type="evidence" value="ECO:0000318"/>
    <property type="project" value="GO_Central"/>
</dbReference>
<dbReference type="GO" id="GO:0005525">
    <property type="term" value="F:GTP binding"/>
    <property type="evidence" value="ECO:0000318"/>
    <property type="project" value="GO_Central"/>
</dbReference>
<dbReference type="GO" id="GO:0003924">
    <property type="term" value="F:GTPase activity"/>
    <property type="evidence" value="ECO:0007669"/>
    <property type="project" value="InterPro"/>
</dbReference>
<dbReference type="GO" id="GO:0046872">
    <property type="term" value="F:metal ion binding"/>
    <property type="evidence" value="ECO:0007669"/>
    <property type="project" value="UniProtKB-KW"/>
</dbReference>
<dbReference type="GO" id="GO:0060271">
    <property type="term" value="P:cilium assembly"/>
    <property type="evidence" value="ECO:0000315"/>
    <property type="project" value="BHF-UCL"/>
</dbReference>
<dbReference type="GO" id="GO:0007368">
    <property type="term" value="P:determination of left/right symmetry"/>
    <property type="evidence" value="ECO:0000315"/>
    <property type="project" value="BHF-UCL"/>
</dbReference>
<dbReference type="GO" id="GO:0007369">
    <property type="term" value="P:gastrulation"/>
    <property type="evidence" value="ECO:0000315"/>
    <property type="project" value="ZFIN"/>
</dbReference>
<dbReference type="GO" id="GO:0006886">
    <property type="term" value="P:intracellular protein transport"/>
    <property type="evidence" value="ECO:0000318"/>
    <property type="project" value="GO_Central"/>
</dbReference>
<dbReference type="GO" id="GO:0070121">
    <property type="term" value="P:Kupffer's vesicle development"/>
    <property type="evidence" value="ECO:0000315"/>
    <property type="project" value="ZFIN"/>
</dbReference>
<dbReference type="GO" id="GO:0032402">
    <property type="term" value="P:melanosome transport"/>
    <property type="evidence" value="ECO:0000315"/>
    <property type="project" value="BHF-UCL"/>
</dbReference>
<dbReference type="GO" id="GO:0033339">
    <property type="term" value="P:pectoral fin development"/>
    <property type="evidence" value="ECO:0000316"/>
    <property type="project" value="ZFIN"/>
</dbReference>
<dbReference type="GO" id="GO:0061512">
    <property type="term" value="P:protein localization to cilium"/>
    <property type="evidence" value="ECO:0000318"/>
    <property type="project" value="GO_Central"/>
</dbReference>
<dbReference type="GO" id="GO:0008593">
    <property type="term" value="P:regulation of Notch signaling pathway"/>
    <property type="evidence" value="ECO:0000315"/>
    <property type="project" value="ZFIN"/>
</dbReference>
<dbReference type="GO" id="GO:0016192">
    <property type="term" value="P:vesicle-mediated transport"/>
    <property type="evidence" value="ECO:0000318"/>
    <property type="project" value="GO_Central"/>
</dbReference>
<dbReference type="GO" id="GO:0007601">
    <property type="term" value="P:visual perception"/>
    <property type="evidence" value="ECO:0000315"/>
    <property type="project" value="ZFIN"/>
</dbReference>
<dbReference type="CDD" id="cd04157">
    <property type="entry name" value="Arl6"/>
    <property type="match status" value="1"/>
</dbReference>
<dbReference type="FunFam" id="3.40.50.300:FF:000457">
    <property type="entry name" value="ADP-ribosylation factor-like protein 6"/>
    <property type="match status" value="1"/>
</dbReference>
<dbReference type="Gene3D" id="3.40.50.300">
    <property type="entry name" value="P-loop containing nucleotide triphosphate hydrolases"/>
    <property type="match status" value="1"/>
</dbReference>
<dbReference type="InterPro" id="IPR041839">
    <property type="entry name" value="Arl6"/>
</dbReference>
<dbReference type="InterPro" id="IPR027417">
    <property type="entry name" value="P-loop_NTPase"/>
</dbReference>
<dbReference type="InterPro" id="IPR005225">
    <property type="entry name" value="Small_GTP-bd"/>
</dbReference>
<dbReference type="InterPro" id="IPR024156">
    <property type="entry name" value="Small_GTPase_ARF"/>
</dbReference>
<dbReference type="InterPro" id="IPR006689">
    <property type="entry name" value="Small_GTPase_ARF/SAR"/>
</dbReference>
<dbReference type="NCBIfam" id="TIGR00231">
    <property type="entry name" value="small_GTP"/>
    <property type="match status" value="1"/>
</dbReference>
<dbReference type="PANTHER" id="PTHR11711">
    <property type="entry name" value="ADP RIBOSYLATION FACTOR-RELATED"/>
    <property type="match status" value="1"/>
</dbReference>
<dbReference type="Pfam" id="PF00025">
    <property type="entry name" value="Arf"/>
    <property type="match status" value="1"/>
</dbReference>
<dbReference type="PRINTS" id="PR00328">
    <property type="entry name" value="SAR1GTPBP"/>
</dbReference>
<dbReference type="SMART" id="SM00177">
    <property type="entry name" value="ARF"/>
    <property type="match status" value="1"/>
</dbReference>
<dbReference type="SMART" id="SM00178">
    <property type="entry name" value="SAR"/>
    <property type="match status" value="1"/>
</dbReference>
<dbReference type="SUPFAM" id="SSF52540">
    <property type="entry name" value="P-loop containing nucleoside triphosphate hydrolases"/>
    <property type="match status" value="1"/>
</dbReference>
<dbReference type="PROSITE" id="PS51417">
    <property type="entry name" value="ARF"/>
    <property type="match status" value="1"/>
</dbReference>
<comment type="function">
    <text evidence="3">Probably involved in membrane protein trafficking at the base of the ciliary organelle. May function in cilia biogenesis. Isoform 2 is required for proper retinal function and organization.</text>
</comment>
<comment type="subcellular location">
    <subcellularLocation>
        <location evidence="1">Cell projection</location>
        <location evidence="1">Cilium membrane</location>
        <topology evidence="1">Peripheral membrane protein</topology>
        <orientation evidence="1">Cytoplasmic side</orientation>
    </subcellularLocation>
    <subcellularLocation>
        <location evidence="1">Cytoplasm</location>
        <location evidence="1">Cytoskeleton</location>
        <location evidence="1">Cilium axoneme</location>
    </subcellularLocation>
    <subcellularLocation>
        <location evidence="1">Cytoplasm</location>
        <location evidence="1">Cytoskeleton</location>
        <location evidence="1">Cilium basal body</location>
    </subcellularLocation>
</comment>
<comment type="alternative products">
    <event type="alternative splicing"/>
    <isoform>
        <id>Q5M9P8-1</id>
        <name>1</name>
        <name>bbs3</name>
        <sequence type="displayed"/>
    </isoform>
    <isoform>
        <id>Q5M9P8-2</id>
        <name>2</name>
        <name>bbs3l</name>
        <sequence type="described" ref="VSP_040513"/>
    </isoform>
</comment>
<comment type="tissue specificity">
    <text evidence="3">Expressed in brain, heart and eye. Isoform 2 is expressed only in the retina.</text>
</comment>
<comment type="developmental stage">
    <text evidence="3">Expressed throughout all the development stages. Isoform 2 is not expressed until 48 hours post fertilization.</text>
</comment>
<comment type="disruption phenotype">
    <text evidence="3">Results in the cardinal features of Bardet-Biedl syndrome in zebrafish, including defects to the ciliated Kupffer's vesicle and delayed retrograde melanosome transport. Isoform 2 defects does not result in Kupffer vesicle or melanosome transport defects, but rather leads to impaired visual function and mislocalization of the photopigment green cone opsin. Isoform 2, but not isoform 1, is sufficient to rescue both the vision defect as well as green opsin localization in the retina.</text>
</comment>
<comment type="similarity">
    <text evidence="4">Belongs to the small GTPase superfamily. Arf family.</text>
</comment>
<evidence type="ECO:0000250" key="1"/>
<evidence type="ECO:0000255" key="2"/>
<evidence type="ECO:0000269" key="3">
    <source>
    </source>
</evidence>
<evidence type="ECO:0000305" key="4"/>